<reference key="1">
    <citation type="journal article" date="1997" name="Int. J. Syst. Bacteriol.">
        <title>A phylogenetic analysis of Borrelia burgdorferi sensu lato based on sequence information from the hbb gene, coding for a histone-like protein.</title>
        <authorList>
            <person name="Valsangiacomo C."/>
            <person name="Balmelli T."/>
            <person name="Piffaretti J.C."/>
        </authorList>
    </citation>
    <scope>NUCLEOTIDE SEQUENCE [GENOMIC DNA]</scope>
    <source>
        <strain>A19S</strain>
        <strain>ATCC BAA-2496 / DSM 23469 / PBi</strain>
        <strain>IP89</strain>
        <strain>NT29</strain>
        <strain>SIKA1</strain>
        <strain>SIKA2</strain>
        <strain>VS102</strain>
        <strain>VSBP</strain>
    </source>
</reference>
<reference key="2">
    <citation type="journal article" date="2004" name="Nucleic Acids Res.">
        <title>Comparative analysis of the Borrelia garinii genome.</title>
        <authorList>
            <person name="Gloeckner G."/>
            <person name="Lehmann R."/>
            <person name="Romualdi A."/>
            <person name="Pradella S."/>
            <person name="Schulte-Spechtel U."/>
            <person name="Schilhabel M."/>
            <person name="Wilske B."/>
            <person name="Suehnel J."/>
            <person name="Platzer M."/>
        </authorList>
    </citation>
    <scope>NUCLEOTIDE SEQUENCE [LARGE SCALE GENOMIC DNA]</scope>
    <source>
        <strain>ATCC BAA-2496 / DSM 23469 / PBi</strain>
    </source>
</reference>
<sequence>MSFSRRPKITKSDIVDQISLNIRNNNLKLEKKYIRLVIDAFFEELKGNLCLNNVIEFRSFGTFEVRKRKGRLNARNPQTGEYVKVLDHHVAYFRPGKDLKERVWGIKG</sequence>
<gene>
    <name type="primary">hbb</name>
    <name type="ordered locus">BG0235</name>
</gene>
<feature type="chain" id="PRO_0000104920" description="DNA-binding protein HBbu">
    <location>
        <begin position="1"/>
        <end position="108"/>
    </location>
</feature>
<feature type="sequence variant" description="In strain: SIKA1 and SIKA2.">
    <original>SL</original>
    <variation>FF</variation>
    <location>
        <begin position="19"/>
        <end position="20"/>
    </location>
</feature>
<feature type="sequence variant" description="In strain: VS102.">
    <original>V</original>
    <variation>I</variation>
    <location>
        <position position="90"/>
    </location>
</feature>
<comment type="function">
    <text evidence="1">Histone-like DNA-binding protein which is capable of wrapping DNA to stabilize it, and thus to prevent its denaturation under extreme environmental conditions.</text>
</comment>
<comment type="similarity">
    <text evidence="2">Belongs to the bacterial histone-like protein family.</text>
</comment>
<accession>Q57153</accession>
<accession>Q45164</accession>
<accession>Q57235</accession>
<accession>Q662D2</accession>
<evidence type="ECO:0000250" key="1"/>
<evidence type="ECO:0000305" key="2"/>
<dbReference type="EMBL" id="U48656">
    <property type="protein sequence ID" value="AAC73078.1"/>
    <property type="molecule type" value="Genomic_DNA"/>
</dbReference>
<dbReference type="EMBL" id="U48657">
    <property type="protein sequence ID" value="AAC73079.1"/>
    <property type="molecule type" value="Genomic_DNA"/>
</dbReference>
<dbReference type="EMBL" id="U48664">
    <property type="protein sequence ID" value="AAC73086.1"/>
    <property type="molecule type" value="Genomic_DNA"/>
</dbReference>
<dbReference type="EMBL" id="U48658">
    <property type="protein sequence ID" value="AAC73080.1"/>
    <property type="molecule type" value="Genomic_DNA"/>
</dbReference>
<dbReference type="EMBL" id="U48659">
    <property type="protein sequence ID" value="AAC73081.1"/>
    <property type="molecule type" value="Genomic_DNA"/>
</dbReference>
<dbReference type="EMBL" id="U48660">
    <property type="protein sequence ID" value="AAC73082.1"/>
    <property type="molecule type" value="Genomic_DNA"/>
</dbReference>
<dbReference type="EMBL" id="U48661">
    <property type="protein sequence ID" value="AAC73083.1"/>
    <property type="molecule type" value="Genomic_DNA"/>
</dbReference>
<dbReference type="EMBL" id="U48662">
    <property type="protein sequence ID" value="AAC73084.1"/>
    <property type="molecule type" value="Genomic_DNA"/>
</dbReference>
<dbReference type="EMBL" id="CP000013">
    <property type="protein sequence ID" value="AAU07089.1"/>
    <property type="molecule type" value="Genomic_DNA"/>
</dbReference>
<dbReference type="RefSeq" id="WP_004793776.1">
    <property type="nucleotide sequence ID" value="NZ_CP028872.1"/>
</dbReference>
<dbReference type="SMR" id="Q57153"/>
<dbReference type="KEGG" id="bga:BG0235"/>
<dbReference type="eggNOG" id="COG0776">
    <property type="taxonomic scope" value="Bacteria"/>
</dbReference>
<dbReference type="HOGENOM" id="CLU_105066_1_3_12"/>
<dbReference type="OrthoDB" id="9799835at2"/>
<dbReference type="Proteomes" id="UP000002276">
    <property type="component" value="Chromosome"/>
</dbReference>
<dbReference type="GO" id="GO:0005829">
    <property type="term" value="C:cytosol"/>
    <property type="evidence" value="ECO:0007669"/>
    <property type="project" value="TreeGrafter"/>
</dbReference>
<dbReference type="GO" id="GO:0003677">
    <property type="term" value="F:DNA binding"/>
    <property type="evidence" value="ECO:0007669"/>
    <property type="project" value="UniProtKB-KW"/>
</dbReference>
<dbReference type="GO" id="GO:0030527">
    <property type="term" value="F:structural constituent of chromatin"/>
    <property type="evidence" value="ECO:0007669"/>
    <property type="project" value="InterPro"/>
</dbReference>
<dbReference type="GO" id="GO:0030261">
    <property type="term" value="P:chromosome condensation"/>
    <property type="evidence" value="ECO:0007669"/>
    <property type="project" value="UniProtKB-KW"/>
</dbReference>
<dbReference type="CDD" id="cd13836">
    <property type="entry name" value="IHF_B"/>
    <property type="match status" value="1"/>
</dbReference>
<dbReference type="Gene3D" id="4.10.520.10">
    <property type="entry name" value="IHF-like DNA-binding proteins"/>
    <property type="match status" value="1"/>
</dbReference>
<dbReference type="InterPro" id="IPR000119">
    <property type="entry name" value="Hist_DNA-bd"/>
</dbReference>
<dbReference type="InterPro" id="IPR020816">
    <property type="entry name" value="Histone-like_DNA-bd_CS"/>
</dbReference>
<dbReference type="InterPro" id="IPR010992">
    <property type="entry name" value="IHF-like_DNA-bd_dom_sf"/>
</dbReference>
<dbReference type="PANTHER" id="PTHR33175">
    <property type="entry name" value="DNA-BINDING PROTEIN HU"/>
    <property type="match status" value="1"/>
</dbReference>
<dbReference type="PANTHER" id="PTHR33175:SF3">
    <property type="entry name" value="DNA-BINDING PROTEIN HU-BETA"/>
    <property type="match status" value="1"/>
</dbReference>
<dbReference type="Pfam" id="PF00216">
    <property type="entry name" value="Bac_DNA_binding"/>
    <property type="match status" value="1"/>
</dbReference>
<dbReference type="PRINTS" id="PR01727">
    <property type="entry name" value="DNABINDINGHU"/>
</dbReference>
<dbReference type="SMART" id="SM00411">
    <property type="entry name" value="BHL"/>
    <property type="match status" value="1"/>
</dbReference>
<dbReference type="SUPFAM" id="SSF47729">
    <property type="entry name" value="IHF-like DNA-binding proteins"/>
    <property type="match status" value="1"/>
</dbReference>
<dbReference type="PROSITE" id="PS00045">
    <property type="entry name" value="HISTONE_LIKE"/>
    <property type="match status" value="1"/>
</dbReference>
<proteinExistence type="inferred from homology"/>
<organism>
    <name type="scientific">Borrelia garinii subsp. bavariensis (strain ATCC BAA-2496 / DSM 23469 / PBi)</name>
    <name type="common">Borreliella bavariensis</name>
    <dbReference type="NCBI Taxonomy" id="290434"/>
    <lineage>
        <taxon>Bacteria</taxon>
        <taxon>Pseudomonadati</taxon>
        <taxon>Spirochaetota</taxon>
        <taxon>Spirochaetia</taxon>
        <taxon>Spirochaetales</taxon>
        <taxon>Borreliaceae</taxon>
        <taxon>Borreliella</taxon>
    </lineage>
</organism>
<name>DBH_BORGP</name>
<keyword id="KW-0226">DNA condensation</keyword>
<keyword id="KW-0238">DNA-binding</keyword>
<protein>
    <recommendedName>
        <fullName>DNA-binding protein HBbu</fullName>
    </recommendedName>
</protein>